<name>PGK_KLULA</name>
<sequence>MSLSSKLTVKDLDVTGKRVFIRVDFNVPLDGKKITSNQRIVAALPTIQYVLEKKPKAIVLASHLGRPNGEVNDKYSLAPVADELSRLLQKPVTFLHDCVGEEVTNAVNNAKDGEVFLLENLRFHIEEEGSRKVDGNKVKADKAAVTKFREQLSSLADVYVNDAFGTAHRAHSSIVGFDLPNRAAGFLLSKELQYFAKALENPTRPFLAILGGAKVADKIQLIDNLLDKVDSLIIGGGMAFTFKKVLENTEIGDSIYDAAGAELVPKLVEKAKKNNVKIVLPTDFVIGDKFSADANTKVVTDKEGIPSGWQGLDNGPESRKAFAATVAEAKTIVWNGPPGVFEFAPFAKGTEALLDAVVASSQAGNTVIIGGGDTATVAKKYGVVDKISHVSTGGGASLELLEGKELPGVTFLSNKQ</sequence>
<accession>P14828</accession>
<accession>Q6CX60</accession>
<protein>
    <recommendedName>
        <fullName>Phosphoglycerate kinase</fullName>
        <ecNumber evidence="4">2.7.2.3</ecNumber>
    </recommendedName>
</protein>
<organism>
    <name type="scientific">Kluyveromyces lactis (strain ATCC 8585 / CBS 2359 / DSM 70799 / NBRC 1267 / NRRL Y-1140 / WM37)</name>
    <name type="common">Yeast</name>
    <name type="synonym">Candida sphaerica</name>
    <dbReference type="NCBI Taxonomy" id="284590"/>
    <lineage>
        <taxon>Eukaryota</taxon>
        <taxon>Fungi</taxon>
        <taxon>Dikarya</taxon>
        <taxon>Ascomycota</taxon>
        <taxon>Saccharomycotina</taxon>
        <taxon>Saccharomycetes</taxon>
        <taxon>Saccharomycetales</taxon>
        <taxon>Saccharomycetaceae</taxon>
        <taxon>Kluyveromyces</taxon>
    </lineage>
</organism>
<keyword id="KW-0067">ATP-binding</keyword>
<keyword id="KW-0963">Cytoplasm</keyword>
<keyword id="KW-0324">Glycolysis</keyword>
<keyword id="KW-0418">Kinase</keyword>
<keyword id="KW-0460">Magnesium</keyword>
<keyword id="KW-0479">Metal-binding</keyword>
<keyword id="KW-0496">Mitochondrion</keyword>
<keyword id="KW-0547">Nucleotide-binding</keyword>
<keyword id="KW-1185">Reference proteome</keyword>
<keyword id="KW-0808">Transferase</keyword>
<dbReference type="EC" id="2.7.2.3" evidence="4"/>
<dbReference type="EMBL" id="X17654">
    <property type="protein sequence ID" value="CAA35646.1"/>
    <property type="molecule type" value="Genomic_DNA"/>
</dbReference>
<dbReference type="EMBL" id="CR382121">
    <property type="protein sequence ID" value="CAH03067.1"/>
    <property type="molecule type" value="Genomic_DNA"/>
</dbReference>
<dbReference type="PIR" id="S07878">
    <property type="entry name" value="KIVKGL"/>
</dbReference>
<dbReference type="RefSeq" id="XP_451479.1">
    <property type="nucleotide sequence ID" value="XM_451479.1"/>
</dbReference>
<dbReference type="SMR" id="P14828"/>
<dbReference type="FunCoup" id="P14828">
    <property type="interactions" value="827"/>
</dbReference>
<dbReference type="STRING" id="284590.P14828"/>
<dbReference type="PaxDb" id="284590-P14828"/>
<dbReference type="KEGG" id="kla:KLLA0_A11011g"/>
<dbReference type="eggNOG" id="KOG1367">
    <property type="taxonomic scope" value="Eukaryota"/>
</dbReference>
<dbReference type="HOGENOM" id="CLU_025427_0_2_1"/>
<dbReference type="InParanoid" id="P14828"/>
<dbReference type="OMA" id="DMIFDIG"/>
<dbReference type="UniPathway" id="UPA00109">
    <property type="reaction ID" value="UER00185"/>
</dbReference>
<dbReference type="Proteomes" id="UP000000598">
    <property type="component" value="Chromosome A"/>
</dbReference>
<dbReference type="GO" id="GO:0005829">
    <property type="term" value="C:cytosol"/>
    <property type="evidence" value="ECO:0007669"/>
    <property type="project" value="TreeGrafter"/>
</dbReference>
<dbReference type="GO" id="GO:0005739">
    <property type="term" value="C:mitochondrion"/>
    <property type="evidence" value="ECO:0007669"/>
    <property type="project" value="UniProtKB-SubCell"/>
</dbReference>
<dbReference type="GO" id="GO:0043531">
    <property type="term" value="F:ADP binding"/>
    <property type="evidence" value="ECO:0007669"/>
    <property type="project" value="TreeGrafter"/>
</dbReference>
<dbReference type="GO" id="GO:0005524">
    <property type="term" value="F:ATP binding"/>
    <property type="evidence" value="ECO:0007669"/>
    <property type="project" value="UniProtKB-KW"/>
</dbReference>
<dbReference type="GO" id="GO:0046872">
    <property type="term" value="F:metal ion binding"/>
    <property type="evidence" value="ECO:0007669"/>
    <property type="project" value="UniProtKB-KW"/>
</dbReference>
<dbReference type="GO" id="GO:0004618">
    <property type="term" value="F:phosphoglycerate kinase activity"/>
    <property type="evidence" value="ECO:0007669"/>
    <property type="project" value="UniProtKB-EC"/>
</dbReference>
<dbReference type="GO" id="GO:0006094">
    <property type="term" value="P:gluconeogenesis"/>
    <property type="evidence" value="ECO:0007669"/>
    <property type="project" value="TreeGrafter"/>
</dbReference>
<dbReference type="GO" id="GO:0006096">
    <property type="term" value="P:glycolytic process"/>
    <property type="evidence" value="ECO:0007669"/>
    <property type="project" value="UniProtKB-UniPathway"/>
</dbReference>
<dbReference type="CDD" id="cd00318">
    <property type="entry name" value="Phosphoglycerate_kinase"/>
    <property type="match status" value="1"/>
</dbReference>
<dbReference type="FunFam" id="3.40.50.1260:FF:000003">
    <property type="entry name" value="Phosphoglycerate kinase"/>
    <property type="match status" value="1"/>
</dbReference>
<dbReference type="FunFam" id="3.40.50.1260:FF:000019">
    <property type="entry name" value="Phosphoglycerate kinase 1"/>
    <property type="match status" value="1"/>
</dbReference>
<dbReference type="Gene3D" id="3.40.50.1260">
    <property type="entry name" value="Phosphoglycerate kinase, N-terminal domain"/>
    <property type="match status" value="3"/>
</dbReference>
<dbReference type="HAMAP" id="MF_00145">
    <property type="entry name" value="Phosphoglyc_kinase"/>
    <property type="match status" value="1"/>
</dbReference>
<dbReference type="InterPro" id="IPR001576">
    <property type="entry name" value="Phosphoglycerate_kinase"/>
</dbReference>
<dbReference type="InterPro" id="IPR015911">
    <property type="entry name" value="Phosphoglycerate_kinase_CS"/>
</dbReference>
<dbReference type="InterPro" id="IPR015824">
    <property type="entry name" value="Phosphoglycerate_kinase_N"/>
</dbReference>
<dbReference type="InterPro" id="IPR036043">
    <property type="entry name" value="Phosphoglycerate_kinase_sf"/>
</dbReference>
<dbReference type="PANTHER" id="PTHR11406">
    <property type="entry name" value="PHOSPHOGLYCERATE KINASE"/>
    <property type="match status" value="1"/>
</dbReference>
<dbReference type="PANTHER" id="PTHR11406:SF0">
    <property type="entry name" value="PHOSPHOGLYCERATE KINASE"/>
    <property type="match status" value="1"/>
</dbReference>
<dbReference type="Pfam" id="PF00162">
    <property type="entry name" value="PGK"/>
    <property type="match status" value="1"/>
</dbReference>
<dbReference type="PIRSF" id="PIRSF000724">
    <property type="entry name" value="Pgk"/>
    <property type="match status" value="1"/>
</dbReference>
<dbReference type="PRINTS" id="PR00477">
    <property type="entry name" value="PHGLYCKINASE"/>
</dbReference>
<dbReference type="SUPFAM" id="SSF53748">
    <property type="entry name" value="Phosphoglycerate kinase"/>
    <property type="match status" value="1"/>
</dbReference>
<dbReference type="PROSITE" id="PS00111">
    <property type="entry name" value="PGLYCERATE_KINASE"/>
    <property type="match status" value="1"/>
</dbReference>
<gene>
    <name type="primary">PGK</name>
    <name type="ordered locus">KLLA0A11011g</name>
</gene>
<reference key="1">
    <citation type="journal article" date="1990" name="Nucleic Acids Res.">
        <title>The primary structure of the 3-phosphoglycerate kinase (PGK) gene from Kluyveromyces lactis.</title>
        <authorList>
            <person name="Fournier A."/>
            <person name="Fleer R."/>
            <person name="Yeh P."/>
            <person name="Mayaux J.F."/>
        </authorList>
    </citation>
    <scope>NUCLEOTIDE SEQUENCE [GENOMIC DNA]</scope>
    <source>
        <strain>ATCC 8585 / CBS 2359 / DSM 70799 / NBRC 1267 / NRRL Y-1140 / WM37</strain>
    </source>
</reference>
<reference key="2">
    <citation type="journal article" date="2004" name="Nature">
        <title>Genome evolution in yeasts.</title>
        <authorList>
            <person name="Dujon B."/>
            <person name="Sherman D."/>
            <person name="Fischer G."/>
            <person name="Durrens P."/>
            <person name="Casaregola S."/>
            <person name="Lafontaine I."/>
            <person name="de Montigny J."/>
            <person name="Marck C."/>
            <person name="Neuveglise C."/>
            <person name="Talla E."/>
            <person name="Goffard N."/>
            <person name="Frangeul L."/>
            <person name="Aigle M."/>
            <person name="Anthouard V."/>
            <person name="Babour A."/>
            <person name="Barbe V."/>
            <person name="Barnay S."/>
            <person name="Blanchin S."/>
            <person name="Beckerich J.-M."/>
            <person name="Beyne E."/>
            <person name="Bleykasten C."/>
            <person name="Boisrame A."/>
            <person name="Boyer J."/>
            <person name="Cattolico L."/>
            <person name="Confanioleri F."/>
            <person name="de Daruvar A."/>
            <person name="Despons L."/>
            <person name="Fabre E."/>
            <person name="Fairhead C."/>
            <person name="Ferry-Dumazet H."/>
            <person name="Groppi A."/>
            <person name="Hantraye F."/>
            <person name="Hennequin C."/>
            <person name="Jauniaux N."/>
            <person name="Joyet P."/>
            <person name="Kachouri R."/>
            <person name="Kerrest A."/>
            <person name="Koszul R."/>
            <person name="Lemaire M."/>
            <person name="Lesur I."/>
            <person name="Ma L."/>
            <person name="Muller H."/>
            <person name="Nicaud J.-M."/>
            <person name="Nikolski M."/>
            <person name="Oztas S."/>
            <person name="Ozier-Kalogeropoulos O."/>
            <person name="Pellenz S."/>
            <person name="Potier S."/>
            <person name="Richard G.-F."/>
            <person name="Straub M.-L."/>
            <person name="Suleau A."/>
            <person name="Swennen D."/>
            <person name="Tekaia F."/>
            <person name="Wesolowski-Louvel M."/>
            <person name="Westhof E."/>
            <person name="Wirth B."/>
            <person name="Zeniou-Meyer M."/>
            <person name="Zivanovic Y."/>
            <person name="Bolotin-Fukuhara M."/>
            <person name="Thierry A."/>
            <person name="Bouchier C."/>
            <person name="Caudron B."/>
            <person name="Scarpelli C."/>
            <person name="Gaillardin C."/>
            <person name="Weissenbach J."/>
            <person name="Wincker P."/>
            <person name="Souciet J.-L."/>
        </authorList>
    </citation>
    <scope>NUCLEOTIDE SEQUENCE [LARGE SCALE GENOMIC DNA]</scope>
    <source>
        <strain>ATCC 8585 / CBS 2359 / DSM 70799 / NBRC 1267 / NRRL Y-1140 / WM37</strain>
    </source>
</reference>
<feature type="chain" id="PRO_0000145882" description="Phosphoglycerate kinase">
    <location>
        <begin position="1"/>
        <end position="416"/>
    </location>
</feature>
<feature type="binding site" evidence="3">
    <location>
        <position position="23"/>
    </location>
    <ligand>
        <name>(2R)-3-phosphoglycerate</name>
        <dbReference type="ChEBI" id="CHEBI:58272"/>
    </ligand>
</feature>
<feature type="binding site" evidence="5">
    <location>
        <position position="24"/>
    </location>
    <ligand>
        <name>(2R)-3-phosphoglycerate</name>
        <dbReference type="ChEBI" id="CHEBI:58272"/>
    </ligand>
</feature>
<feature type="binding site" evidence="3">
    <location>
        <position position="25"/>
    </location>
    <ligand>
        <name>(2R)-3-phosphoglycerate</name>
        <dbReference type="ChEBI" id="CHEBI:58272"/>
    </ligand>
</feature>
<feature type="binding site" evidence="5">
    <location>
        <position position="26"/>
    </location>
    <ligand>
        <name>(2R)-3-phosphoglycerate</name>
        <dbReference type="ChEBI" id="CHEBI:58272"/>
    </ligand>
</feature>
<feature type="binding site" evidence="3">
    <location>
        <position position="38"/>
    </location>
    <ligand>
        <name>(2R)-3-phosphoglycerate</name>
        <dbReference type="ChEBI" id="CHEBI:58272"/>
    </ligand>
</feature>
<feature type="binding site" evidence="5">
    <location>
        <position position="39"/>
    </location>
    <ligand>
        <name>(2R)-3-phosphoglycerate</name>
        <dbReference type="ChEBI" id="CHEBI:58272"/>
    </ligand>
</feature>
<feature type="binding site" evidence="3">
    <location>
        <position position="62"/>
    </location>
    <ligand>
        <name>(2R)-3-phosphoglycerate</name>
        <dbReference type="ChEBI" id="CHEBI:58272"/>
    </ligand>
</feature>
<feature type="binding site" evidence="5">
    <location>
        <position position="63"/>
    </location>
    <ligand>
        <name>(2R)-3-phosphoglycerate</name>
        <dbReference type="ChEBI" id="CHEBI:58272"/>
    </ligand>
</feature>
<feature type="binding site" evidence="3">
    <location>
        <position position="65"/>
    </location>
    <ligand>
        <name>(2R)-3-phosphoglycerate</name>
        <dbReference type="ChEBI" id="CHEBI:58272"/>
    </ligand>
</feature>
<feature type="binding site" evidence="5">
    <location>
        <position position="66"/>
    </location>
    <ligand>
        <name>(2R)-3-phosphoglycerate</name>
        <dbReference type="ChEBI" id="CHEBI:58272"/>
    </ligand>
</feature>
<feature type="binding site" evidence="3">
    <location>
        <position position="121"/>
    </location>
    <ligand>
        <name>(2R)-3-phosphoglycerate</name>
        <dbReference type="ChEBI" id="CHEBI:58272"/>
    </ligand>
</feature>
<feature type="binding site" evidence="5">
    <location>
        <position position="122"/>
    </location>
    <ligand>
        <name>(2R)-3-phosphoglycerate</name>
        <dbReference type="ChEBI" id="CHEBI:58272"/>
    </ligand>
</feature>
<feature type="binding site" evidence="3">
    <location>
        <position position="168"/>
    </location>
    <ligand>
        <name>(2R)-3-phosphoglycerate</name>
        <dbReference type="ChEBI" id="CHEBI:58272"/>
    </ligand>
</feature>
<feature type="binding site" evidence="5">
    <location>
        <position position="169"/>
    </location>
    <ligand>
        <name>(2R)-3-phosphoglycerate</name>
        <dbReference type="ChEBI" id="CHEBI:58272"/>
    </ligand>
</feature>
<feature type="binding site" evidence="3">
    <location>
        <position position="212"/>
    </location>
    <ligand>
        <name>ADP</name>
        <dbReference type="ChEBI" id="CHEBI:456216"/>
    </ligand>
</feature>
<feature type="binding site" evidence="3">
    <location>
        <position position="212"/>
    </location>
    <ligand>
        <name>CDP</name>
        <dbReference type="ChEBI" id="CHEBI:58069"/>
    </ligand>
</feature>
<feature type="binding site" evidence="5">
    <location>
        <position position="213"/>
    </location>
    <ligand>
        <name>AMP</name>
        <dbReference type="ChEBI" id="CHEBI:456215"/>
    </ligand>
</feature>
<feature type="binding site" evidence="5">
    <location>
        <position position="213"/>
    </location>
    <ligand>
        <name>ATP</name>
        <dbReference type="ChEBI" id="CHEBI:30616"/>
    </ligand>
</feature>
<feature type="binding site" evidence="3">
    <location>
        <position position="213"/>
    </location>
    <ligand>
        <name>Mg(2+)</name>
        <dbReference type="ChEBI" id="CHEBI:18420"/>
    </ligand>
</feature>
<feature type="binding site" evidence="5">
    <location>
        <position position="214"/>
    </location>
    <ligand>
        <name>AMP</name>
        <dbReference type="ChEBI" id="CHEBI:456215"/>
    </ligand>
</feature>
<feature type="binding site" evidence="3">
    <location>
        <position position="216"/>
    </location>
    <ligand>
        <name>Mg(2+)</name>
        <dbReference type="ChEBI" id="CHEBI:18420"/>
    </ligand>
</feature>
<feature type="binding site" evidence="3">
    <location>
        <position position="217"/>
    </location>
    <ligand>
        <name>CDP</name>
        <dbReference type="ChEBI" id="CHEBI:58069"/>
    </ligand>
</feature>
<feature type="binding site" evidence="3">
    <location>
        <position position="217"/>
    </location>
    <ligand>
        <name>Mg(2+)</name>
        <dbReference type="ChEBI" id="CHEBI:18420"/>
    </ligand>
</feature>
<feature type="binding site" evidence="5">
    <location>
        <position position="218"/>
    </location>
    <ligand>
        <name>AMP</name>
        <dbReference type="ChEBI" id="CHEBI:456215"/>
    </ligand>
</feature>
<feature type="binding site" evidence="5">
    <location>
        <position position="218"/>
    </location>
    <ligand>
        <name>ATP</name>
        <dbReference type="ChEBI" id="CHEBI:30616"/>
    </ligand>
</feature>
<feature type="binding site" evidence="3">
    <location>
        <position position="236"/>
    </location>
    <ligand>
        <name>ADP</name>
        <dbReference type="ChEBI" id="CHEBI:456216"/>
    </ligand>
</feature>
<feature type="binding site" evidence="3">
    <location>
        <position position="236"/>
    </location>
    <ligand>
        <name>CDP</name>
        <dbReference type="ChEBI" id="CHEBI:58069"/>
    </ligand>
</feature>
<feature type="binding site" evidence="5">
    <location>
        <position position="237"/>
    </location>
    <ligand>
        <name>AMP</name>
        <dbReference type="ChEBI" id="CHEBI:456215"/>
    </ligand>
</feature>
<feature type="binding site" evidence="5">
    <location>
        <position position="237"/>
    </location>
    <ligand>
        <name>ATP</name>
        <dbReference type="ChEBI" id="CHEBI:30616"/>
    </ligand>
</feature>
<feature type="binding site" evidence="5">
    <location>
        <position position="311"/>
    </location>
    <ligand>
        <name>AMP</name>
        <dbReference type="ChEBI" id="CHEBI:456215"/>
    </ligand>
</feature>
<feature type="binding site" evidence="5">
    <location>
        <position position="311"/>
    </location>
    <ligand>
        <name>ATP</name>
        <dbReference type="ChEBI" id="CHEBI:30616"/>
    </ligand>
</feature>
<feature type="binding site" evidence="3">
    <location>
        <position position="336"/>
    </location>
    <ligand>
        <name>CDP</name>
        <dbReference type="ChEBI" id="CHEBI:58069"/>
    </ligand>
</feature>
<feature type="binding site" evidence="3">
    <location>
        <position position="341"/>
    </location>
    <ligand>
        <name>ADP</name>
        <dbReference type="ChEBI" id="CHEBI:456216"/>
    </ligand>
</feature>
<feature type="binding site" evidence="3">
    <location>
        <position position="341"/>
    </location>
    <ligand>
        <name>CDP</name>
        <dbReference type="ChEBI" id="CHEBI:58069"/>
    </ligand>
</feature>
<feature type="binding site" evidence="5">
    <location>
        <position position="342"/>
    </location>
    <ligand>
        <name>AMP</name>
        <dbReference type="ChEBI" id="CHEBI:456215"/>
    </ligand>
</feature>
<feature type="binding site" evidence="5">
    <location>
        <position position="342"/>
    </location>
    <ligand>
        <name>ATP</name>
        <dbReference type="ChEBI" id="CHEBI:30616"/>
    </ligand>
</feature>
<feature type="binding site" evidence="5">
    <location>
        <position position="373"/>
    </location>
    <ligand>
        <name>ATP</name>
        <dbReference type="ChEBI" id="CHEBI:30616"/>
    </ligand>
</feature>
<feature type="binding site" evidence="5">
    <location>
        <position position="373"/>
    </location>
    <ligand>
        <name>Mg(2+)</name>
        <dbReference type="ChEBI" id="CHEBI:18420"/>
    </ligand>
</feature>
<feature type="binding site" evidence="5">
    <location>
        <position position="374"/>
    </location>
    <ligand>
        <name>ATP</name>
        <dbReference type="ChEBI" id="CHEBI:30616"/>
    </ligand>
</feature>
<feature type="sequence conflict" description="In Ref. 1; CAA35646." evidence="6" ref="1">
    <original>T</original>
    <variation>N</variation>
    <location>
        <position position="366"/>
    </location>
</feature>
<comment type="function">
    <text evidence="2 3 4">Catalyzes one of the two ATP producing reactions in the glycolytic pathway via the reversible conversion of 1,3-diphosphoglycerate to 3-phosphoglycerate (By similarity). Both L- and D- forms of purine and pyrimidine nucleotides can be used as substrates, but the activity is much lower on pyrimidines (By similarity). Negatively regulates the biosynthesis of acetyl-CoA from pyruvate in the mitochondrion (By similarity).</text>
</comment>
<comment type="catalytic activity">
    <reaction evidence="4">
        <text>(2R)-3-phosphoglycerate + ATP = (2R)-3-phospho-glyceroyl phosphate + ADP</text>
        <dbReference type="Rhea" id="RHEA:14801"/>
        <dbReference type="ChEBI" id="CHEBI:30616"/>
        <dbReference type="ChEBI" id="CHEBI:57604"/>
        <dbReference type="ChEBI" id="CHEBI:58272"/>
        <dbReference type="ChEBI" id="CHEBI:456216"/>
        <dbReference type="EC" id="2.7.2.3"/>
    </reaction>
</comment>
<comment type="cofactor">
    <cofactor evidence="3">
        <name>Mg(2+)</name>
        <dbReference type="ChEBI" id="CHEBI:18420"/>
    </cofactor>
</comment>
<comment type="pathway">
    <text evidence="4">Carbohydrate degradation; glycolysis; pyruvate from D-glyceraldehyde 3-phosphate: step 2/5.</text>
</comment>
<comment type="subunit">
    <text evidence="1">Monomer.</text>
</comment>
<comment type="subcellular location">
    <subcellularLocation>
        <location evidence="4">Cytoplasm</location>
    </subcellularLocation>
    <subcellularLocation>
        <location evidence="4">Mitochondrion</location>
    </subcellularLocation>
</comment>
<comment type="similarity">
    <text evidence="6">Belongs to the phosphoglycerate kinase family.</text>
</comment>
<proteinExistence type="inferred from homology"/>
<evidence type="ECO:0000250" key="1"/>
<evidence type="ECO:0000250" key="2">
    <source>
        <dbReference type="UniProtKB" id="A0A7G5KET3"/>
    </source>
</evidence>
<evidence type="ECO:0000250" key="3">
    <source>
        <dbReference type="UniProtKB" id="P00558"/>
    </source>
</evidence>
<evidence type="ECO:0000250" key="4">
    <source>
        <dbReference type="UniProtKB" id="P00560"/>
    </source>
</evidence>
<evidence type="ECO:0000250" key="5">
    <source>
        <dbReference type="UniProtKB" id="Q7SIB7"/>
    </source>
</evidence>
<evidence type="ECO:0000305" key="6"/>